<evidence type="ECO:0000250" key="1"/>
<evidence type="ECO:0000255" key="2">
    <source>
        <dbReference type="PROSITE-ProRule" id="PRU00981"/>
    </source>
</evidence>
<evidence type="ECO:0000256" key="3">
    <source>
        <dbReference type="SAM" id="MobiDB-lite"/>
    </source>
</evidence>
<evidence type="ECO:0000269" key="4">
    <source>
    </source>
</evidence>
<evidence type="ECO:0000305" key="5"/>
<accession>Q0VH32</accession>
<accession>Q58EX1</accession>
<name>MNT_XENLA</name>
<proteinExistence type="evidence at transcript level"/>
<feature type="chain" id="PRO_0000253713" description="Max-binding protein MNT">
    <location>
        <begin position="1"/>
        <end position="574"/>
    </location>
</feature>
<feature type="domain" description="bHLH" evidence="2">
    <location>
        <begin position="223"/>
        <end position="274"/>
    </location>
</feature>
<feature type="region of interest" description="Disordered" evidence="3">
    <location>
        <begin position="17"/>
        <end position="84"/>
    </location>
</feature>
<feature type="region of interest" description="Disordered" evidence="3">
    <location>
        <begin position="171"/>
        <end position="233"/>
    </location>
</feature>
<feature type="region of interest" description="Leucine-zipper">
    <location>
        <begin position="274"/>
        <end position="302"/>
    </location>
</feature>
<feature type="region of interest" description="Disordered" evidence="3">
    <location>
        <begin position="323"/>
        <end position="353"/>
    </location>
</feature>
<feature type="compositionally biased region" description="Basic and acidic residues" evidence="3">
    <location>
        <begin position="23"/>
        <end position="33"/>
    </location>
</feature>
<feature type="compositionally biased region" description="Acidic residues" evidence="3">
    <location>
        <begin position="34"/>
        <end position="46"/>
    </location>
</feature>
<feature type="compositionally biased region" description="Basic and acidic residues" evidence="3">
    <location>
        <begin position="47"/>
        <end position="57"/>
    </location>
</feature>
<feature type="compositionally biased region" description="Pro residues" evidence="3">
    <location>
        <begin position="61"/>
        <end position="84"/>
    </location>
</feature>
<feature type="compositionally biased region" description="Low complexity" evidence="3">
    <location>
        <begin position="174"/>
        <end position="194"/>
    </location>
</feature>
<feature type="compositionally biased region" description="Basic and acidic residues" evidence="3">
    <location>
        <begin position="206"/>
        <end position="217"/>
    </location>
</feature>
<feature type="compositionally biased region" description="Acidic residues" evidence="3">
    <location>
        <begin position="337"/>
        <end position="348"/>
    </location>
</feature>
<feature type="sequence conflict" description="In Ref. 2." evidence="5" ref="2">
    <original>E</original>
    <variation>EE</variation>
    <location>
        <position position="46"/>
    </location>
</feature>
<feature type="sequence conflict" description="In Ref. 2." evidence="5" ref="2">
    <location>
        <begin position="81"/>
        <end position="82"/>
    </location>
</feature>
<feature type="sequence conflict" description="In Ref. 2; AAH91719." evidence="5" ref="2">
    <original>T</original>
    <variation>S</variation>
    <location>
        <position position="535"/>
    </location>
</feature>
<keyword id="KW-0238">DNA-binding</keyword>
<keyword id="KW-0539">Nucleus</keyword>
<keyword id="KW-1185">Reference proteome</keyword>
<keyword id="KW-0678">Repressor</keyword>
<keyword id="KW-0804">Transcription</keyword>
<keyword id="KW-0805">Transcription regulation</keyword>
<gene>
    <name type="primary">mnt</name>
</gene>
<protein>
    <recommendedName>
        <fullName>Max-binding protein MNT</fullName>
    </recommendedName>
    <alternativeName>
        <fullName>Myc antagonist MNT</fullName>
    </alternativeName>
</protein>
<comment type="function">
    <text evidence="1">Binds DNA as a heterodimer with MAX and represses transcription. Binds to the canonical E box sequence 5'-CACGTG-3' and, with higher affinity, to 5'-CACGCG-3' (By similarity).</text>
</comment>
<comment type="subunit">
    <text evidence="1">Efficient DNA binding requires dimerization with another bHLH protein. Binds DNA as a homodimer or a heterodimer with MAX (By similarity).</text>
</comment>
<comment type="subcellular location">
    <subcellularLocation>
        <location evidence="2">Nucleus</location>
    </subcellularLocation>
</comment>
<comment type="tissue specificity">
    <text evidence="4">Expression in the CNS is localized anteriorly and in addition is present in the migrating neural crest cells.</text>
</comment>
<comment type="developmental stage">
    <text evidence="4">First detected at neurula stages, and are localized anteriorly in the neural plate, neural crest and weakly in the spinal cord. As development proceeds, localized throughout the CNS, eye vesicle, and the streams of migrating branchial and hyoid neural crest and is also present weakly in the cement gland. Embryos at stage 27 show a strong expression in the retina and spinal cord, as well as a weak expression in the forebrain and midbrain. Predominately located in the outermost marginal layer of the ventral hindbrain, where terminally differentiated neurons are located.</text>
</comment>
<organism>
    <name type="scientific">Xenopus laevis</name>
    <name type="common">African clawed frog</name>
    <dbReference type="NCBI Taxonomy" id="8355"/>
    <lineage>
        <taxon>Eukaryota</taxon>
        <taxon>Metazoa</taxon>
        <taxon>Chordata</taxon>
        <taxon>Craniata</taxon>
        <taxon>Vertebrata</taxon>
        <taxon>Euteleostomi</taxon>
        <taxon>Amphibia</taxon>
        <taxon>Batrachia</taxon>
        <taxon>Anura</taxon>
        <taxon>Pipoidea</taxon>
        <taxon>Pipidae</taxon>
        <taxon>Xenopodinae</taxon>
        <taxon>Xenopus</taxon>
        <taxon>Xenopus</taxon>
    </lineage>
</organism>
<dbReference type="EMBL" id="AY964106">
    <property type="protein sequence ID" value="AAY32593.1"/>
    <property type="molecule type" value="mRNA"/>
</dbReference>
<dbReference type="EMBL" id="BC091719">
    <property type="protein sequence ID" value="AAH91719.1"/>
    <property type="molecule type" value="mRNA"/>
</dbReference>
<dbReference type="RefSeq" id="NP_001089310.1">
    <property type="nucleotide sequence ID" value="NM_001095841.1"/>
</dbReference>
<dbReference type="SMR" id="Q0VH32"/>
<dbReference type="DNASU" id="734360"/>
<dbReference type="GeneID" id="734360"/>
<dbReference type="KEGG" id="xla:734360"/>
<dbReference type="AGR" id="Xenbase:XB-GENE-6087152"/>
<dbReference type="CTD" id="734360"/>
<dbReference type="Xenbase" id="XB-GENE-6087152">
    <property type="gene designation" value="mnt.L"/>
</dbReference>
<dbReference type="OrthoDB" id="5981879at2759"/>
<dbReference type="Proteomes" id="UP000186698">
    <property type="component" value="Chromosome 2L"/>
</dbReference>
<dbReference type="Bgee" id="734360">
    <property type="expression patterns" value="Expressed in internal ear and 19 other cell types or tissues"/>
</dbReference>
<dbReference type="GO" id="GO:0005634">
    <property type="term" value="C:nucleus"/>
    <property type="evidence" value="ECO:0007669"/>
    <property type="project" value="UniProtKB-SubCell"/>
</dbReference>
<dbReference type="GO" id="GO:0000981">
    <property type="term" value="F:DNA-binding transcription factor activity, RNA polymerase II-specific"/>
    <property type="evidence" value="ECO:0000318"/>
    <property type="project" value="GO_Central"/>
</dbReference>
<dbReference type="GO" id="GO:0046983">
    <property type="term" value="F:protein dimerization activity"/>
    <property type="evidence" value="ECO:0007669"/>
    <property type="project" value="InterPro"/>
</dbReference>
<dbReference type="GO" id="GO:0000978">
    <property type="term" value="F:RNA polymerase II cis-regulatory region sequence-specific DNA binding"/>
    <property type="evidence" value="ECO:0000318"/>
    <property type="project" value="GO_Central"/>
</dbReference>
<dbReference type="GO" id="GO:0006357">
    <property type="term" value="P:regulation of transcription by RNA polymerase II"/>
    <property type="evidence" value="ECO:0000318"/>
    <property type="project" value="GO_Central"/>
</dbReference>
<dbReference type="CDD" id="cd11402">
    <property type="entry name" value="bHLHzip_Mnt"/>
    <property type="match status" value="1"/>
</dbReference>
<dbReference type="FunFam" id="4.10.280.10:FF:000034">
    <property type="entry name" value="MAX network transcriptional repressor"/>
    <property type="match status" value="1"/>
</dbReference>
<dbReference type="Gene3D" id="4.10.280.10">
    <property type="entry name" value="Helix-loop-helix DNA-binding domain"/>
    <property type="match status" value="1"/>
</dbReference>
<dbReference type="InterPro" id="IPR011598">
    <property type="entry name" value="bHLH_dom"/>
</dbReference>
<dbReference type="InterPro" id="IPR036638">
    <property type="entry name" value="HLH_DNA-bd_sf"/>
</dbReference>
<dbReference type="PANTHER" id="PTHR11969">
    <property type="entry name" value="MAX DIMERIZATION, MAD"/>
    <property type="match status" value="1"/>
</dbReference>
<dbReference type="PANTHER" id="PTHR11969:SF99">
    <property type="entry name" value="MAX-BINDING PROTEIN MNT"/>
    <property type="match status" value="1"/>
</dbReference>
<dbReference type="Pfam" id="PF00010">
    <property type="entry name" value="HLH"/>
    <property type="match status" value="1"/>
</dbReference>
<dbReference type="SMART" id="SM00353">
    <property type="entry name" value="HLH"/>
    <property type="match status" value="1"/>
</dbReference>
<dbReference type="SUPFAM" id="SSF101447">
    <property type="entry name" value="Formin homology 2 domain (FH2 domain)"/>
    <property type="match status" value="1"/>
</dbReference>
<dbReference type="SUPFAM" id="SSF47459">
    <property type="entry name" value="HLH, helix-loop-helix DNA-binding domain"/>
    <property type="match status" value="1"/>
</dbReference>
<dbReference type="PROSITE" id="PS50888">
    <property type="entry name" value="BHLH"/>
    <property type="match status" value="1"/>
</dbReference>
<sequence length="574" mass="63408">MSLETLLQAALFLEWQAQQQQQRTREENDKILVEQEEEEEEEEEEENKSVLRTEEHINQLPPDPVAPPAPAPPPPPPPPPPPSAPVTVIPLPVVSCTPQPVVQTTVSPPVLQRHAPVVSPPVLNKEVSLPPVIQRPPSTVLPEIKTTPLNMGSPKPLHHYQAPVLAITHHHLMQQQQQQPIQPQPTSLQPQQQPHPQPLGALRLPVTDDGRSNEQRRRPGGAGTREVHNKLEKNRRAHLKECFETLKRNIPNVDDKKTSNLSVLRSALRYIQSLKRKEKEYEHEMERLAREKIATQQRLADLKNDLSQWMDIIEIDRIVRQTVQPEDDQASTSTASEGEDNIDEDMDDDRPVNALSKRQQPGLIKMIPSSAAVHNHHSTILPQHVSIQQKQVPSPHTQPQISSQALVPTQAMVPAQTHIVTASAVQSTVIAHTATTHASVIQTLNHVISGPQTKHIAHIAPSTSSPVQLTTAAQPIGHITVHPATINHMTHLGQQLPIYPQPVAVSQPMMSHIAHTISHPQVNGTTNLGQPAVMTKPTVGTQMVHHPQLVGQTVLNPVTMVTMPSFPVSTLKLA</sequence>
<reference key="1">
    <citation type="journal article" date="2005" name="Dev. Dyn.">
        <title>Isolation and comparative expression analysis of the Myc-regulatory proteins Mad1, Mad3, and Mnt during Xenopus development.</title>
        <authorList>
            <person name="Juergens K."/>
            <person name="Rust B."/>
            <person name="Pieler T."/>
            <person name="Henningfeld K.A."/>
        </authorList>
    </citation>
    <scope>NUCLEOTIDE SEQUENCE [MRNA]</scope>
    <scope>TISSUE SPECIFICITY</scope>
    <scope>DEVELOPMENTAL STAGE</scope>
</reference>
<reference key="2">
    <citation type="submission" date="2005-03" db="EMBL/GenBank/DDBJ databases">
        <authorList>
            <consortium name="NIH - Xenopus Gene Collection (XGC) project"/>
        </authorList>
    </citation>
    <scope>NUCLEOTIDE SEQUENCE [LARGE SCALE MRNA]</scope>
    <source>
        <tissue>Embryo</tissue>
    </source>
</reference>